<accession>B0CJX7</accession>
<feature type="chain" id="PRO_1000085486" description="Orotidine 5'-phosphate decarboxylase">
    <location>
        <begin position="1"/>
        <end position="238"/>
    </location>
</feature>
<feature type="active site" description="Proton donor" evidence="1">
    <location>
        <position position="69"/>
    </location>
</feature>
<feature type="binding site" evidence="1">
    <location>
        <position position="18"/>
    </location>
    <ligand>
        <name>substrate</name>
    </ligand>
</feature>
<feature type="binding site" evidence="1">
    <location>
        <position position="40"/>
    </location>
    <ligand>
        <name>substrate</name>
    </ligand>
</feature>
<feature type="binding site" evidence="1">
    <location>
        <begin position="67"/>
        <end position="76"/>
    </location>
    <ligand>
        <name>substrate</name>
    </ligand>
</feature>
<feature type="binding site" evidence="1">
    <location>
        <position position="122"/>
    </location>
    <ligand>
        <name>substrate</name>
    </ligand>
</feature>
<feature type="binding site" evidence="1">
    <location>
        <position position="183"/>
    </location>
    <ligand>
        <name>substrate</name>
    </ligand>
</feature>
<feature type="binding site" evidence="1">
    <location>
        <position position="192"/>
    </location>
    <ligand>
        <name>substrate</name>
    </ligand>
</feature>
<feature type="binding site" evidence="1">
    <location>
        <position position="213"/>
    </location>
    <ligand>
        <name>substrate</name>
    </ligand>
</feature>
<proteinExistence type="inferred from homology"/>
<reference key="1">
    <citation type="submission" date="2007-12" db="EMBL/GenBank/DDBJ databases">
        <title>Brucella suis ATCC 23445 whole genome shotgun sequencing project.</title>
        <authorList>
            <person name="Setubal J.C."/>
            <person name="Bowns C."/>
            <person name="Boyle S."/>
            <person name="Crasta O.R."/>
            <person name="Czar M.J."/>
            <person name="Dharmanolla C."/>
            <person name="Gillespie J.J."/>
            <person name="Kenyon R.W."/>
            <person name="Lu J."/>
            <person name="Mane S."/>
            <person name="Mohapatra S."/>
            <person name="Nagrani S."/>
            <person name="Purkayastha A."/>
            <person name="Rajasimha H.K."/>
            <person name="Shallom J.M."/>
            <person name="Shallom S."/>
            <person name="Shukla M."/>
            <person name="Snyder E.E."/>
            <person name="Sobral B.W."/>
            <person name="Wattam A.R."/>
            <person name="Will R."/>
            <person name="Williams K."/>
            <person name="Yoo H."/>
            <person name="Bruce D."/>
            <person name="Detter C."/>
            <person name="Munk C."/>
            <person name="Brettin T.S."/>
        </authorList>
    </citation>
    <scope>NUCLEOTIDE SEQUENCE [LARGE SCALE GENOMIC DNA]</scope>
    <source>
        <strain>ATCC 23445 / NCTC 10510</strain>
    </source>
</reference>
<sequence length="238" mass="25020">MTTELHDDASGRLIVGLDVPTIAEAEKVVEELGNAVSFYKIGYQLVFAGGLDFAKSLVAARKKVFLDMKLLDIDNTIAKGVENVAKMGVSMLTLHAYPKAMRAAVEAARGSDLCLLGVTVLTSMDNADLREAGYSDNAETLVLKRARQAHEAGMGGIVASAVEAQAIRQAVGPDMAIVTPGIRPAGSEKGDQKRVMTPADALRAGASHLVVARPIVGAPDRKAAALAILKEMRSIGRS</sequence>
<gene>
    <name evidence="1" type="primary">pyrF</name>
    <name type="ordered locus">BSUIS_A1968</name>
</gene>
<dbReference type="EC" id="4.1.1.23" evidence="1"/>
<dbReference type="EMBL" id="CP000911">
    <property type="protein sequence ID" value="ABY38978.1"/>
    <property type="molecule type" value="Genomic_DNA"/>
</dbReference>
<dbReference type="RefSeq" id="WP_004689341.1">
    <property type="nucleotide sequence ID" value="NC_010169.1"/>
</dbReference>
<dbReference type="SMR" id="B0CJX7"/>
<dbReference type="GeneID" id="97534614"/>
<dbReference type="KEGG" id="bmt:BSUIS_A1968"/>
<dbReference type="HOGENOM" id="CLU_067069_1_0_5"/>
<dbReference type="UniPathway" id="UPA00070">
    <property type="reaction ID" value="UER00120"/>
</dbReference>
<dbReference type="Proteomes" id="UP000008545">
    <property type="component" value="Chromosome I"/>
</dbReference>
<dbReference type="GO" id="GO:0005829">
    <property type="term" value="C:cytosol"/>
    <property type="evidence" value="ECO:0007669"/>
    <property type="project" value="TreeGrafter"/>
</dbReference>
<dbReference type="GO" id="GO:0004590">
    <property type="term" value="F:orotidine-5'-phosphate decarboxylase activity"/>
    <property type="evidence" value="ECO:0007669"/>
    <property type="project" value="UniProtKB-UniRule"/>
</dbReference>
<dbReference type="GO" id="GO:0006207">
    <property type="term" value="P:'de novo' pyrimidine nucleobase biosynthetic process"/>
    <property type="evidence" value="ECO:0007669"/>
    <property type="project" value="InterPro"/>
</dbReference>
<dbReference type="GO" id="GO:0044205">
    <property type="term" value="P:'de novo' UMP biosynthetic process"/>
    <property type="evidence" value="ECO:0007669"/>
    <property type="project" value="UniProtKB-UniRule"/>
</dbReference>
<dbReference type="CDD" id="cd04725">
    <property type="entry name" value="OMP_decarboxylase_like"/>
    <property type="match status" value="1"/>
</dbReference>
<dbReference type="Gene3D" id="3.20.20.70">
    <property type="entry name" value="Aldolase class I"/>
    <property type="match status" value="1"/>
</dbReference>
<dbReference type="HAMAP" id="MF_01200_B">
    <property type="entry name" value="OMPdecase_type1_B"/>
    <property type="match status" value="1"/>
</dbReference>
<dbReference type="InterPro" id="IPR013785">
    <property type="entry name" value="Aldolase_TIM"/>
</dbReference>
<dbReference type="InterPro" id="IPR014732">
    <property type="entry name" value="OMPdecase"/>
</dbReference>
<dbReference type="InterPro" id="IPR018089">
    <property type="entry name" value="OMPdecase_AS"/>
</dbReference>
<dbReference type="InterPro" id="IPR047596">
    <property type="entry name" value="OMPdecase_bac"/>
</dbReference>
<dbReference type="InterPro" id="IPR001754">
    <property type="entry name" value="OMPdeCOase_dom"/>
</dbReference>
<dbReference type="InterPro" id="IPR011060">
    <property type="entry name" value="RibuloseP-bd_barrel"/>
</dbReference>
<dbReference type="NCBIfam" id="NF001273">
    <property type="entry name" value="PRK00230.1"/>
    <property type="match status" value="1"/>
</dbReference>
<dbReference type="NCBIfam" id="TIGR01740">
    <property type="entry name" value="pyrF"/>
    <property type="match status" value="1"/>
</dbReference>
<dbReference type="PANTHER" id="PTHR32119">
    <property type="entry name" value="OROTIDINE 5'-PHOSPHATE DECARBOXYLASE"/>
    <property type="match status" value="1"/>
</dbReference>
<dbReference type="PANTHER" id="PTHR32119:SF2">
    <property type="entry name" value="OROTIDINE 5'-PHOSPHATE DECARBOXYLASE"/>
    <property type="match status" value="1"/>
</dbReference>
<dbReference type="Pfam" id="PF00215">
    <property type="entry name" value="OMPdecase"/>
    <property type="match status" value="1"/>
</dbReference>
<dbReference type="SMART" id="SM00934">
    <property type="entry name" value="OMPdecase"/>
    <property type="match status" value="1"/>
</dbReference>
<dbReference type="SUPFAM" id="SSF51366">
    <property type="entry name" value="Ribulose-phoshate binding barrel"/>
    <property type="match status" value="1"/>
</dbReference>
<dbReference type="PROSITE" id="PS00156">
    <property type="entry name" value="OMPDECASE"/>
    <property type="match status" value="1"/>
</dbReference>
<organism>
    <name type="scientific">Brucella suis (strain ATCC 23445 / NCTC 10510)</name>
    <dbReference type="NCBI Taxonomy" id="470137"/>
    <lineage>
        <taxon>Bacteria</taxon>
        <taxon>Pseudomonadati</taxon>
        <taxon>Pseudomonadota</taxon>
        <taxon>Alphaproteobacteria</taxon>
        <taxon>Hyphomicrobiales</taxon>
        <taxon>Brucellaceae</taxon>
        <taxon>Brucella/Ochrobactrum group</taxon>
        <taxon>Brucella</taxon>
    </lineage>
</organism>
<keyword id="KW-0210">Decarboxylase</keyword>
<keyword id="KW-0456">Lyase</keyword>
<keyword id="KW-0665">Pyrimidine biosynthesis</keyword>
<name>PYRF_BRUSI</name>
<protein>
    <recommendedName>
        <fullName evidence="1">Orotidine 5'-phosphate decarboxylase</fullName>
        <ecNumber evidence="1">4.1.1.23</ecNumber>
    </recommendedName>
    <alternativeName>
        <fullName evidence="1">OMP decarboxylase</fullName>
        <shortName evidence="1">OMPDCase</shortName>
        <shortName evidence="1">OMPdecase</shortName>
    </alternativeName>
</protein>
<comment type="function">
    <text evidence="1">Catalyzes the decarboxylation of orotidine 5'-monophosphate (OMP) to uridine 5'-monophosphate (UMP).</text>
</comment>
<comment type="catalytic activity">
    <reaction evidence="1">
        <text>orotidine 5'-phosphate + H(+) = UMP + CO2</text>
        <dbReference type="Rhea" id="RHEA:11596"/>
        <dbReference type="ChEBI" id="CHEBI:15378"/>
        <dbReference type="ChEBI" id="CHEBI:16526"/>
        <dbReference type="ChEBI" id="CHEBI:57538"/>
        <dbReference type="ChEBI" id="CHEBI:57865"/>
        <dbReference type="EC" id="4.1.1.23"/>
    </reaction>
</comment>
<comment type="pathway">
    <text evidence="1">Pyrimidine metabolism; UMP biosynthesis via de novo pathway; UMP from orotate: step 2/2.</text>
</comment>
<comment type="subunit">
    <text evidence="1">Homodimer.</text>
</comment>
<comment type="similarity">
    <text evidence="1">Belongs to the OMP decarboxylase family. Type 1 subfamily.</text>
</comment>
<evidence type="ECO:0000255" key="1">
    <source>
        <dbReference type="HAMAP-Rule" id="MF_01200"/>
    </source>
</evidence>